<feature type="initiator methionine" description="Removed" evidence="2">
    <location>
        <position position="1"/>
    </location>
</feature>
<feature type="chain" id="PRO_0000057751" description="Protein phosphatase 1G">
    <location>
        <begin position="2"/>
        <end position="542"/>
    </location>
</feature>
<feature type="domain" description="PPM-type phosphatase" evidence="5">
    <location>
        <begin position="26"/>
        <end position="502"/>
    </location>
</feature>
<feature type="region of interest" description="Disordered" evidence="6">
    <location>
        <begin position="117"/>
        <end position="136"/>
    </location>
</feature>
<feature type="region of interest" description="Disordered" evidence="6">
    <location>
        <begin position="164"/>
        <end position="325"/>
    </location>
</feature>
<feature type="region of interest" description="Disordered" evidence="6">
    <location>
        <begin position="513"/>
        <end position="542"/>
    </location>
</feature>
<feature type="compositionally biased region" description="Acidic residues" evidence="6">
    <location>
        <begin position="123"/>
        <end position="136"/>
    </location>
</feature>
<feature type="compositionally biased region" description="Acidic residues" evidence="6">
    <location>
        <begin position="259"/>
        <end position="309"/>
    </location>
</feature>
<feature type="binding site" evidence="3">
    <location>
        <position position="60"/>
    </location>
    <ligand>
        <name>Mn(2+)</name>
        <dbReference type="ChEBI" id="CHEBI:29035"/>
        <label>1</label>
    </ligand>
</feature>
<feature type="binding site" evidence="3">
    <location>
        <position position="60"/>
    </location>
    <ligand>
        <name>Mn(2+)</name>
        <dbReference type="ChEBI" id="CHEBI:29035"/>
        <label>2</label>
    </ligand>
</feature>
<feature type="binding site" evidence="3">
    <location>
        <position position="61"/>
    </location>
    <ligand>
        <name>Mn(2+)</name>
        <dbReference type="ChEBI" id="CHEBI:29035"/>
        <label>1</label>
    </ligand>
</feature>
<feature type="binding site" evidence="3">
    <location>
        <position position="438"/>
    </location>
    <ligand>
        <name>Mn(2+)</name>
        <dbReference type="ChEBI" id="CHEBI:29035"/>
        <label>2</label>
    </ligand>
</feature>
<feature type="binding site" evidence="3">
    <location>
        <position position="493"/>
    </location>
    <ligand>
        <name>Mn(2+)</name>
        <dbReference type="ChEBI" id="CHEBI:29035"/>
        <label>2</label>
    </ligand>
</feature>
<feature type="modified residue" description="Omega-N-methylarginine" evidence="2">
    <location>
        <position position="22"/>
    </location>
</feature>
<feature type="modified residue" description="Phosphothreonine" evidence="2">
    <location>
        <position position="122"/>
    </location>
</feature>
<feature type="modified residue" description="N6-acetyllysine" evidence="10">
    <location>
        <position position="380"/>
    </location>
</feature>
<feature type="modified residue" description="Phosphoserine" evidence="9">
    <location>
        <position position="524"/>
    </location>
</feature>
<feature type="lipid moiety-binding region" description="N-myristoyl glycine" evidence="2">
    <location>
        <position position="2"/>
    </location>
</feature>
<feature type="sequence conflict" description="In Ref. 3." evidence="8" ref="3">
    <original>EDED</original>
    <variation>NSAR</variation>
    <location>
        <begin position="123"/>
        <end position="126"/>
    </location>
</feature>
<dbReference type="EC" id="3.1.3.16" evidence="3"/>
<dbReference type="EMBL" id="BC009004">
    <property type="protein sequence ID" value="AAH09004.1"/>
    <property type="molecule type" value="mRNA"/>
</dbReference>
<dbReference type="EMBL" id="U42383">
    <property type="protein sequence ID" value="AAC26322.1"/>
    <property type="molecule type" value="mRNA"/>
</dbReference>
<dbReference type="CCDS" id="CCDS19179.1"/>
<dbReference type="RefSeq" id="NP_032040.1">
    <property type="nucleotide sequence ID" value="NM_008014.3"/>
</dbReference>
<dbReference type="SMR" id="Q61074"/>
<dbReference type="BioGRID" id="199674">
    <property type="interactions" value="16"/>
</dbReference>
<dbReference type="FunCoup" id="Q61074">
    <property type="interactions" value="4497"/>
</dbReference>
<dbReference type="IntAct" id="Q61074">
    <property type="interactions" value="6"/>
</dbReference>
<dbReference type="MINT" id="Q61074"/>
<dbReference type="STRING" id="10090.ENSMUSP00000031032"/>
<dbReference type="GlyGen" id="Q61074">
    <property type="glycosylation" value="1 site, 1 O-linked glycan (1 site)"/>
</dbReference>
<dbReference type="iPTMnet" id="Q61074"/>
<dbReference type="PhosphoSitePlus" id="Q61074"/>
<dbReference type="SwissPalm" id="Q61074"/>
<dbReference type="jPOST" id="Q61074"/>
<dbReference type="PaxDb" id="10090-ENSMUSP00000031032"/>
<dbReference type="PeptideAtlas" id="Q61074"/>
<dbReference type="ProteomicsDB" id="291714"/>
<dbReference type="Pumba" id="Q61074"/>
<dbReference type="Antibodypedia" id="28474">
    <property type="antibodies" value="413 antibodies from 32 providers"/>
</dbReference>
<dbReference type="DNASU" id="14208"/>
<dbReference type="Ensembl" id="ENSMUST00000031032.11">
    <property type="protein sequence ID" value="ENSMUSP00000031032.8"/>
    <property type="gene ID" value="ENSMUSG00000029147.12"/>
</dbReference>
<dbReference type="GeneID" id="14208"/>
<dbReference type="KEGG" id="mmu:14208"/>
<dbReference type="UCSC" id="uc008wxr.1">
    <property type="organism name" value="mouse"/>
</dbReference>
<dbReference type="AGR" id="MGI:106065"/>
<dbReference type="CTD" id="5496"/>
<dbReference type="MGI" id="MGI:106065">
    <property type="gene designation" value="Ppm1g"/>
</dbReference>
<dbReference type="VEuPathDB" id="HostDB:ENSMUSG00000029147"/>
<dbReference type="eggNOG" id="KOG0699">
    <property type="taxonomic scope" value="Eukaryota"/>
</dbReference>
<dbReference type="GeneTree" id="ENSGT00940000158427"/>
<dbReference type="InParanoid" id="Q61074"/>
<dbReference type="OMA" id="YCAMKLP"/>
<dbReference type="OrthoDB" id="10264738at2759"/>
<dbReference type="PhylomeDB" id="Q61074"/>
<dbReference type="TreeFam" id="TF354280"/>
<dbReference type="BioGRID-ORCS" id="14208">
    <property type="hits" value="12 hits in 78 CRISPR screens"/>
</dbReference>
<dbReference type="ChiTaRS" id="Ppm1g">
    <property type="organism name" value="mouse"/>
</dbReference>
<dbReference type="PRO" id="PR:Q61074"/>
<dbReference type="Proteomes" id="UP000000589">
    <property type="component" value="Chromosome 5"/>
</dbReference>
<dbReference type="RNAct" id="Q61074">
    <property type="molecule type" value="protein"/>
</dbReference>
<dbReference type="Bgee" id="ENSMUSG00000029147">
    <property type="expression patterns" value="Expressed in fetal liver hematopoietic progenitor cell and 272 other cell types or tissues"/>
</dbReference>
<dbReference type="ExpressionAtlas" id="Q61074">
    <property type="expression patterns" value="baseline and differential"/>
</dbReference>
<dbReference type="GO" id="GO:0016020">
    <property type="term" value="C:membrane"/>
    <property type="evidence" value="ECO:0007669"/>
    <property type="project" value="UniProtKB-SubCell"/>
</dbReference>
<dbReference type="GO" id="GO:0005654">
    <property type="term" value="C:nucleoplasm"/>
    <property type="evidence" value="ECO:0007669"/>
    <property type="project" value="Ensembl"/>
</dbReference>
<dbReference type="GO" id="GO:0005634">
    <property type="term" value="C:nucleus"/>
    <property type="evidence" value="ECO:0000314"/>
    <property type="project" value="MGI"/>
</dbReference>
<dbReference type="GO" id="GO:0046872">
    <property type="term" value="F:metal ion binding"/>
    <property type="evidence" value="ECO:0007669"/>
    <property type="project" value="UniProtKB-KW"/>
</dbReference>
<dbReference type="GO" id="GO:0004721">
    <property type="term" value="F:phosphoprotein phosphatase activity"/>
    <property type="evidence" value="ECO:0000314"/>
    <property type="project" value="MGI"/>
</dbReference>
<dbReference type="GO" id="GO:0004722">
    <property type="term" value="F:protein serine/threonine phosphatase activity"/>
    <property type="evidence" value="ECO:0007669"/>
    <property type="project" value="UniProtKB-EC"/>
</dbReference>
<dbReference type="GO" id="GO:0051726">
    <property type="term" value="P:regulation of cell cycle"/>
    <property type="evidence" value="ECO:0000314"/>
    <property type="project" value="MGI"/>
</dbReference>
<dbReference type="CDD" id="cd00143">
    <property type="entry name" value="PP2Cc"/>
    <property type="match status" value="1"/>
</dbReference>
<dbReference type="FunFam" id="3.60.40.10:FF:000023">
    <property type="entry name" value="Protein phosphatase, Mg2+/Mn2+-dependent, 1G"/>
    <property type="match status" value="1"/>
</dbReference>
<dbReference type="FunFam" id="3.60.40.10:FF:000029">
    <property type="entry name" value="Protein phosphatase, Mg2+/Mn2+-dependent, 1G"/>
    <property type="match status" value="1"/>
</dbReference>
<dbReference type="Gene3D" id="3.60.40.10">
    <property type="entry name" value="PPM-type phosphatase domain"/>
    <property type="match status" value="2"/>
</dbReference>
<dbReference type="InterPro" id="IPR015655">
    <property type="entry name" value="PP2C"/>
</dbReference>
<dbReference type="InterPro" id="IPR000222">
    <property type="entry name" value="PP2C_BS"/>
</dbReference>
<dbReference type="InterPro" id="IPR036457">
    <property type="entry name" value="PPM-type-like_dom_sf"/>
</dbReference>
<dbReference type="InterPro" id="IPR001932">
    <property type="entry name" value="PPM-type_phosphatase-like_dom"/>
</dbReference>
<dbReference type="PANTHER" id="PTHR13832:SF803">
    <property type="entry name" value="PROTEIN PHOSPHATASE 1G"/>
    <property type="match status" value="1"/>
</dbReference>
<dbReference type="PANTHER" id="PTHR13832">
    <property type="entry name" value="PROTEIN PHOSPHATASE 2C"/>
    <property type="match status" value="1"/>
</dbReference>
<dbReference type="Pfam" id="PF00481">
    <property type="entry name" value="PP2C"/>
    <property type="match status" value="2"/>
</dbReference>
<dbReference type="SMART" id="SM00332">
    <property type="entry name" value="PP2Cc"/>
    <property type="match status" value="1"/>
</dbReference>
<dbReference type="SUPFAM" id="SSF81606">
    <property type="entry name" value="PP2C-like"/>
    <property type="match status" value="1"/>
</dbReference>
<dbReference type="PROSITE" id="PS01032">
    <property type="entry name" value="PPM_1"/>
    <property type="match status" value="1"/>
</dbReference>
<dbReference type="PROSITE" id="PS51746">
    <property type="entry name" value="PPM_2"/>
    <property type="match status" value="1"/>
</dbReference>
<name>PPM1G_MOUSE</name>
<reference key="1">
    <citation type="journal article" date="1997" name="Mol. Cell. Biol.">
        <title>FIN13, a novel growth factor-inducible serine-threonine phosphatase which can inhibit cell cycle progression.</title>
        <authorList>
            <person name="Guthridge M.A."/>
            <person name="Bellosta P."/>
            <person name="Tavoloni N."/>
            <person name="Basilico C."/>
        </authorList>
    </citation>
    <scope>NUCLEOTIDE SEQUENCE [MRNA]</scope>
    <scope>FUNCTION</scope>
    <scope>SUBCELLULAR LOCATION</scope>
</reference>
<reference key="2">
    <citation type="journal article" date="2004" name="Genome Res.">
        <title>The status, quality, and expansion of the NIH full-length cDNA project: the Mammalian Gene Collection (MGC).</title>
        <authorList>
            <consortium name="The MGC Project Team"/>
        </authorList>
    </citation>
    <scope>NUCLEOTIDE SEQUENCE [LARGE SCALE MRNA]</scope>
    <source>
        <strain>FVB/N</strain>
        <tissue>Mammary gland</tissue>
    </source>
</reference>
<reference key="3">
    <citation type="journal article" date="1996" name="Oncogene">
        <title>Induction of expression of growth-related genes by FGF-4 in mouse fibroblasts.</title>
        <authorList>
            <person name="Guthridge M.A."/>
            <person name="Seldin M."/>
            <person name="Basilico C."/>
        </authorList>
    </citation>
    <scope>NUCLEOTIDE SEQUENCE [MRNA] OF 123-420</scope>
</reference>
<reference key="4">
    <citation type="journal article" date="2010" name="Cell">
        <title>A tissue-specific atlas of mouse protein phosphorylation and expression.</title>
        <authorList>
            <person name="Huttlin E.L."/>
            <person name="Jedrychowski M.P."/>
            <person name="Elias J.E."/>
            <person name="Goswami T."/>
            <person name="Rad R."/>
            <person name="Beausoleil S.A."/>
            <person name="Villen J."/>
            <person name="Haas W."/>
            <person name="Sowa M.E."/>
            <person name="Gygi S.P."/>
        </authorList>
    </citation>
    <scope>PHOSPHORYLATION [LARGE SCALE ANALYSIS] AT SER-524</scope>
    <scope>IDENTIFICATION BY MASS SPECTROMETRY [LARGE SCALE ANALYSIS]</scope>
    <source>
        <tissue>Brain</tissue>
        <tissue>Brown adipose tissue</tissue>
        <tissue>Heart</tissue>
        <tissue>Kidney</tissue>
        <tissue>Liver</tissue>
        <tissue>Lung</tissue>
        <tissue>Pancreas</tissue>
        <tissue>Spleen</tissue>
        <tissue>Testis</tissue>
    </source>
</reference>
<reference key="5">
    <citation type="journal article" date="2013" name="Mol. Cell">
        <title>SIRT5-mediated lysine desuccinylation impacts diverse metabolic pathways.</title>
        <authorList>
            <person name="Park J."/>
            <person name="Chen Y."/>
            <person name="Tishkoff D.X."/>
            <person name="Peng C."/>
            <person name="Tan M."/>
            <person name="Dai L."/>
            <person name="Xie Z."/>
            <person name="Zhang Y."/>
            <person name="Zwaans B.M."/>
            <person name="Skinner M.E."/>
            <person name="Lombard D.B."/>
            <person name="Zhao Y."/>
        </authorList>
    </citation>
    <scope>ACETYLATION [LARGE SCALE ANALYSIS] AT LYS-380</scope>
    <scope>IDENTIFICATION BY MASS SPECTROMETRY [LARGE SCALE ANALYSIS]</scope>
    <source>
        <tissue>Embryonic fibroblast</tissue>
    </source>
</reference>
<accession>Q61074</accession>
<protein>
    <recommendedName>
        <fullName>Protein phosphatase 1G</fullName>
        <ecNumber evidence="3">3.1.3.16</ecNumber>
    </recommendedName>
    <alternativeName>
        <fullName>Fibroblast growth factor-inducible protein 13</fullName>
        <shortName>FIN13</shortName>
    </alternativeName>
    <alternativeName>
        <fullName>Protein phosphatase 1C</fullName>
    </alternativeName>
    <alternativeName>
        <fullName>Protein phosphatase 2C isoform gamma</fullName>
        <shortName>PP2C-gamma</shortName>
    </alternativeName>
    <alternativeName>
        <fullName>Protein phosphatase magnesium-dependent 1 gamma</fullName>
    </alternativeName>
</protein>
<gene>
    <name type="primary">Ppm1g</name>
    <name type="synonym">Fin13</name>
    <name type="synonym">Ppm1c</name>
</gene>
<proteinExistence type="evidence at protein level"/>
<organism>
    <name type="scientific">Mus musculus</name>
    <name type="common">Mouse</name>
    <dbReference type="NCBI Taxonomy" id="10090"/>
    <lineage>
        <taxon>Eukaryota</taxon>
        <taxon>Metazoa</taxon>
        <taxon>Chordata</taxon>
        <taxon>Craniata</taxon>
        <taxon>Vertebrata</taxon>
        <taxon>Euteleostomi</taxon>
        <taxon>Mammalia</taxon>
        <taxon>Eutheria</taxon>
        <taxon>Euarchontoglires</taxon>
        <taxon>Glires</taxon>
        <taxon>Rodentia</taxon>
        <taxon>Myomorpha</taxon>
        <taxon>Muroidea</taxon>
        <taxon>Muridae</taxon>
        <taxon>Murinae</taxon>
        <taxon>Mus</taxon>
        <taxon>Mus</taxon>
    </lineage>
</organism>
<sequence length="542" mass="58728">MGAYLSQPNTVKCSGDGVGAPRLPLPYGFSAMQGWRVSMEDAHNCIPELDNETAMFSVYDGHGGEEVALYCAKYLPDIIKDQKAYKEGKLQKALQDAFLAIDAKLTTEEVIKELAQIAGRPTEDEDDKDKVADEDDVDNEEAALLHEEATMTIEELLTRYGQNCQKVPPHTKSGIGTGDEPGPQGLNGEAGPEDPSRETPSQENGPTAKGHTGFSSNSEHGTEAGQISEPGTATGEAGPSCSSASDKLPRVAKSKFFEDSEDESDEVEEEEDDSEECSEDEDGYSSEEAENEEDEDDTEEAEEDDDEEMMVPGMEGKEEPGSDSGTTAVVALIRGKQLIVANAGDSRCVVSEAGKALDMSYDHKPEDEVELARIKNAGGKVTMDGRVNGGLNLSRAIGDHFYKRNKNLPPQEQMISALPDIKVLTLTDDHEFMVIACDGIWNVMSSQEVVDFIQSKISQRDENGELRLLSSIVEELLDQCLAPDTSGDGTGCDNMTCIIICFKPRNTVELQAESGKRKLEEALSTEGAEDTGNSDKKKAKRD</sequence>
<keyword id="KW-0007">Acetylation</keyword>
<keyword id="KW-0131">Cell cycle</keyword>
<keyword id="KW-0378">Hydrolase</keyword>
<keyword id="KW-0449">Lipoprotein</keyword>
<keyword id="KW-0460">Magnesium</keyword>
<keyword id="KW-0464">Manganese</keyword>
<keyword id="KW-0472">Membrane</keyword>
<keyword id="KW-0479">Metal-binding</keyword>
<keyword id="KW-0488">Methylation</keyword>
<keyword id="KW-0519">Myristate</keyword>
<keyword id="KW-0539">Nucleus</keyword>
<keyword id="KW-0597">Phosphoprotein</keyword>
<keyword id="KW-0904">Protein phosphatase</keyword>
<keyword id="KW-1185">Reference proteome</keyword>
<keyword id="KW-0677">Repeat</keyword>
<evidence type="ECO:0000250" key="1">
    <source>
        <dbReference type="UniProtKB" id="F1LNI5"/>
    </source>
</evidence>
<evidence type="ECO:0000250" key="2">
    <source>
        <dbReference type="UniProtKB" id="O15355"/>
    </source>
</evidence>
<evidence type="ECO:0000250" key="3">
    <source>
        <dbReference type="UniProtKB" id="P35813"/>
    </source>
</evidence>
<evidence type="ECO:0000250" key="4">
    <source>
        <dbReference type="UniProtKB" id="P39966"/>
    </source>
</evidence>
<evidence type="ECO:0000255" key="5">
    <source>
        <dbReference type="PROSITE-ProRule" id="PRU01082"/>
    </source>
</evidence>
<evidence type="ECO:0000256" key="6">
    <source>
        <dbReference type="SAM" id="MobiDB-lite"/>
    </source>
</evidence>
<evidence type="ECO:0000269" key="7">
    <source>
    </source>
</evidence>
<evidence type="ECO:0000305" key="8"/>
<evidence type="ECO:0007744" key="9">
    <source>
    </source>
</evidence>
<evidence type="ECO:0007744" key="10">
    <source>
    </source>
</evidence>
<comment type="function">
    <text evidence="7">May be involved in regulation of cell cycle.</text>
</comment>
<comment type="catalytic activity">
    <reaction evidence="5">
        <text>O-phospho-L-seryl-[protein] + H2O = L-seryl-[protein] + phosphate</text>
        <dbReference type="Rhea" id="RHEA:20629"/>
        <dbReference type="Rhea" id="RHEA-COMP:9863"/>
        <dbReference type="Rhea" id="RHEA-COMP:11604"/>
        <dbReference type="ChEBI" id="CHEBI:15377"/>
        <dbReference type="ChEBI" id="CHEBI:29999"/>
        <dbReference type="ChEBI" id="CHEBI:43474"/>
        <dbReference type="ChEBI" id="CHEBI:83421"/>
        <dbReference type="EC" id="3.1.3.16"/>
    </reaction>
    <physiologicalReaction direction="left-to-right" evidence="8">
        <dbReference type="Rhea" id="RHEA:20630"/>
    </physiologicalReaction>
</comment>
<comment type="catalytic activity">
    <reaction evidence="4">
        <text>O-phospho-L-threonyl-[protein] + H2O = L-threonyl-[protein] + phosphate</text>
        <dbReference type="Rhea" id="RHEA:47004"/>
        <dbReference type="Rhea" id="RHEA-COMP:11060"/>
        <dbReference type="Rhea" id="RHEA-COMP:11605"/>
        <dbReference type="ChEBI" id="CHEBI:15377"/>
        <dbReference type="ChEBI" id="CHEBI:30013"/>
        <dbReference type="ChEBI" id="CHEBI:43474"/>
        <dbReference type="ChEBI" id="CHEBI:61977"/>
        <dbReference type="EC" id="3.1.3.16"/>
    </reaction>
    <physiologicalReaction direction="left-to-right" evidence="4">
        <dbReference type="Rhea" id="RHEA:47005"/>
    </physiologicalReaction>
</comment>
<comment type="cofactor">
    <cofactor evidence="3">
        <name>Mg(2+)</name>
        <dbReference type="ChEBI" id="CHEBI:18420"/>
    </cofactor>
    <cofactor evidence="3">
        <name>Mn(2+)</name>
        <dbReference type="ChEBI" id="CHEBI:29035"/>
    </cofactor>
    <text evidence="5">Binds 2 magnesium or manganese ions per subunit.</text>
</comment>
<comment type="subunit">
    <text evidence="1">Interacts with NOL3; may dephosphorylate NOL3.</text>
</comment>
<comment type="subcellular location">
    <subcellularLocation>
        <location evidence="7">Nucleus</location>
    </subcellularLocation>
    <subcellularLocation>
        <location evidence="2">Membrane</location>
        <topology evidence="2">Lipid-anchor</topology>
    </subcellularLocation>
</comment>
<comment type="tissue specificity">
    <text>Highly expressed in testis. Low level of expression in kidney. Also expressed in a number of tissues undergoing proliferation including embryo, uterus at pregnancy, placenta, and ovaries.</text>
</comment>
<comment type="induction">
    <text>By FGF-4 and serum.</text>
</comment>
<comment type="similarity">
    <text evidence="8">Belongs to the PP2C family.</text>
</comment>